<reference key="1">
    <citation type="journal article" date="2008" name="J. Bacteriol.">
        <title>Genome sequence of Staphylococcus aureus strain Newman and comparative analysis of staphylococcal genomes: polymorphism and evolution of two major pathogenicity islands.</title>
        <authorList>
            <person name="Baba T."/>
            <person name="Bae T."/>
            <person name="Schneewind O."/>
            <person name="Takeuchi F."/>
            <person name="Hiramatsu K."/>
        </authorList>
    </citation>
    <scope>NUCLEOTIDE SEQUENCE [LARGE SCALE GENOMIC DNA]</scope>
    <source>
        <strain>Newman</strain>
    </source>
</reference>
<sequence>MEDYKQRIKNKLNVVPMEPGCYLMKDRNDQVIYVGKAKKLRNRLRSYFTGAHDAKTTRLVGEIRRFEFIVTSSETESLLLELNLIKQYQPRYNILLKDDKSYPFIKITKEKYPRLLVTRTVKQGTGKYFGPYPNAYSAQETKKLLDRIYPYRKCDKMPDKLCLYYHIGQCLGPCVYDVDLSKYAQMTKEITDFLNGEDKTILKSLEERMLTASESLDFERAKEYRDLIQHIQNLTNKQKIMSSDKTIRDVFGYSVDKGWMCIQVFFIRQGNMIKRDTTMIPLQQTEEEEFYTFIGQFYSLNQHILPKEVHVPRNLDKEMIQSVVDTKIVQPARGPKKDMVDLAAHNAKVSLNNKFELISRDESRTIKAIEELGTQMGIQTPIRIEAFDNSNIQGVDPVSAMVTFVDGKPDKKNYRKYKIKTVKGPDDYKSMREVVRRRYSRVLNEGLPLPDLIIVDGGKGHMNGVIDVLQNELGLDIPVAGLQKNDKHQTSELLYGASAEIVPLKKNSQAFYLLHRIQDEVHRFAITFHRQTRQKTGLKSILDDIDGIGNKRKTLLLRSFGSIKKMKEATLEDFKNIGIPENVAKNLHEQLHK</sequence>
<feature type="chain" id="PRO_1000077848" description="UvrABC system protein C">
    <location>
        <begin position="1"/>
        <end position="593"/>
    </location>
</feature>
<feature type="domain" description="GIY-YIG" evidence="1">
    <location>
        <begin position="17"/>
        <end position="94"/>
    </location>
</feature>
<feature type="domain" description="UVR" evidence="1">
    <location>
        <begin position="199"/>
        <end position="234"/>
    </location>
</feature>
<proteinExistence type="inferred from homology"/>
<name>UVRC_STAAE</name>
<keyword id="KW-0963">Cytoplasm</keyword>
<keyword id="KW-0227">DNA damage</keyword>
<keyword id="KW-0228">DNA excision</keyword>
<keyword id="KW-0234">DNA repair</keyword>
<keyword id="KW-0267">Excision nuclease</keyword>
<keyword id="KW-0742">SOS response</keyword>
<accession>A6QG48</accession>
<dbReference type="EMBL" id="AP009351">
    <property type="protein sequence ID" value="BAF67330.1"/>
    <property type="molecule type" value="Genomic_DNA"/>
</dbReference>
<dbReference type="RefSeq" id="WP_000390529.1">
    <property type="nucleotide sequence ID" value="NZ_JBBIAE010000001.1"/>
</dbReference>
<dbReference type="SMR" id="A6QG48"/>
<dbReference type="KEGG" id="sae:NWMN_1058"/>
<dbReference type="HOGENOM" id="CLU_014841_3_2_9"/>
<dbReference type="Proteomes" id="UP000006386">
    <property type="component" value="Chromosome"/>
</dbReference>
<dbReference type="GO" id="GO:0005737">
    <property type="term" value="C:cytoplasm"/>
    <property type="evidence" value="ECO:0007669"/>
    <property type="project" value="UniProtKB-SubCell"/>
</dbReference>
<dbReference type="GO" id="GO:0009380">
    <property type="term" value="C:excinuclease repair complex"/>
    <property type="evidence" value="ECO:0007669"/>
    <property type="project" value="InterPro"/>
</dbReference>
<dbReference type="GO" id="GO:0003677">
    <property type="term" value="F:DNA binding"/>
    <property type="evidence" value="ECO:0007669"/>
    <property type="project" value="UniProtKB-UniRule"/>
</dbReference>
<dbReference type="GO" id="GO:0009381">
    <property type="term" value="F:excinuclease ABC activity"/>
    <property type="evidence" value="ECO:0007669"/>
    <property type="project" value="UniProtKB-UniRule"/>
</dbReference>
<dbReference type="GO" id="GO:0006289">
    <property type="term" value="P:nucleotide-excision repair"/>
    <property type="evidence" value="ECO:0007669"/>
    <property type="project" value="UniProtKB-UniRule"/>
</dbReference>
<dbReference type="GO" id="GO:0009432">
    <property type="term" value="P:SOS response"/>
    <property type="evidence" value="ECO:0007669"/>
    <property type="project" value="UniProtKB-UniRule"/>
</dbReference>
<dbReference type="CDD" id="cd10434">
    <property type="entry name" value="GIY-YIG_UvrC_Cho"/>
    <property type="match status" value="1"/>
</dbReference>
<dbReference type="FunFam" id="3.30.420.340:FF:000002">
    <property type="entry name" value="UvrABC system protein C"/>
    <property type="match status" value="1"/>
</dbReference>
<dbReference type="FunFam" id="3.40.1440.10:FF:000001">
    <property type="entry name" value="UvrABC system protein C"/>
    <property type="match status" value="1"/>
</dbReference>
<dbReference type="FunFam" id="4.10.860.10:FF:000007">
    <property type="entry name" value="UvrABC system protein C"/>
    <property type="match status" value="1"/>
</dbReference>
<dbReference type="Gene3D" id="1.10.150.20">
    <property type="entry name" value="5' to 3' exonuclease, C-terminal subdomain"/>
    <property type="match status" value="1"/>
</dbReference>
<dbReference type="Gene3D" id="3.40.1440.10">
    <property type="entry name" value="GIY-YIG endonuclease"/>
    <property type="match status" value="1"/>
</dbReference>
<dbReference type="Gene3D" id="4.10.860.10">
    <property type="entry name" value="UVR domain"/>
    <property type="match status" value="1"/>
</dbReference>
<dbReference type="Gene3D" id="3.30.420.340">
    <property type="entry name" value="UvrC, RNAse H endonuclease domain"/>
    <property type="match status" value="1"/>
</dbReference>
<dbReference type="HAMAP" id="MF_00203">
    <property type="entry name" value="UvrC"/>
    <property type="match status" value="1"/>
</dbReference>
<dbReference type="InterPro" id="IPR000305">
    <property type="entry name" value="GIY-YIG_endonuc"/>
</dbReference>
<dbReference type="InterPro" id="IPR035901">
    <property type="entry name" value="GIY-YIG_endonuc_sf"/>
</dbReference>
<dbReference type="InterPro" id="IPR047296">
    <property type="entry name" value="GIY-YIG_UvrC_Cho"/>
</dbReference>
<dbReference type="InterPro" id="IPR010994">
    <property type="entry name" value="RuvA_2-like"/>
</dbReference>
<dbReference type="InterPro" id="IPR001943">
    <property type="entry name" value="UVR_dom"/>
</dbReference>
<dbReference type="InterPro" id="IPR036876">
    <property type="entry name" value="UVR_dom_sf"/>
</dbReference>
<dbReference type="InterPro" id="IPR050066">
    <property type="entry name" value="UvrABC_protein_C"/>
</dbReference>
<dbReference type="InterPro" id="IPR004791">
    <property type="entry name" value="UvrC"/>
</dbReference>
<dbReference type="InterPro" id="IPR001162">
    <property type="entry name" value="UvrC_RNase_H_dom"/>
</dbReference>
<dbReference type="InterPro" id="IPR038476">
    <property type="entry name" value="UvrC_RNase_H_dom_sf"/>
</dbReference>
<dbReference type="NCBIfam" id="TIGR00194">
    <property type="entry name" value="uvrC"/>
    <property type="match status" value="1"/>
</dbReference>
<dbReference type="PANTHER" id="PTHR30562:SF1">
    <property type="entry name" value="UVRABC SYSTEM PROTEIN C"/>
    <property type="match status" value="1"/>
</dbReference>
<dbReference type="PANTHER" id="PTHR30562">
    <property type="entry name" value="UVRC/OXIDOREDUCTASE"/>
    <property type="match status" value="1"/>
</dbReference>
<dbReference type="Pfam" id="PF01541">
    <property type="entry name" value="GIY-YIG"/>
    <property type="match status" value="1"/>
</dbReference>
<dbReference type="Pfam" id="PF02151">
    <property type="entry name" value="UVR"/>
    <property type="match status" value="1"/>
</dbReference>
<dbReference type="Pfam" id="PF22920">
    <property type="entry name" value="UvrC_RNaseH"/>
    <property type="match status" value="1"/>
</dbReference>
<dbReference type="Pfam" id="PF08459">
    <property type="entry name" value="UvrC_RNaseH_dom"/>
    <property type="match status" value="1"/>
</dbReference>
<dbReference type="SMART" id="SM00465">
    <property type="entry name" value="GIYc"/>
    <property type="match status" value="1"/>
</dbReference>
<dbReference type="SUPFAM" id="SSF46600">
    <property type="entry name" value="C-terminal UvrC-binding domain of UvrB"/>
    <property type="match status" value="1"/>
</dbReference>
<dbReference type="SUPFAM" id="SSF82771">
    <property type="entry name" value="GIY-YIG endonuclease"/>
    <property type="match status" value="1"/>
</dbReference>
<dbReference type="SUPFAM" id="SSF47781">
    <property type="entry name" value="RuvA domain 2-like"/>
    <property type="match status" value="1"/>
</dbReference>
<dbReference type="PROSITE" id="PS50164">
    <property type="entry name" value="GIY_YIG"/>
    <property type="match status" value="1"/>
</dbReference>
<dbReference type="PROSITE" id="PS50151">
    <property type="entry name" value="UVR"/>
    <property type="match status" value="1"/>
</dbReference>
<dbReference type="PROSITE" id="PS50165">
    <property type="entry name" value="UVRC"/>
    <property type="match status" value="1"/>
</dbReference>
<comment type="function">
    <text evidence="1">The UvrABC repair system catalyzes the recognition and processing of DNA lesions. UvrC both incises the 5' and 3' sides of the lesion. The N-terminal half is responsible for the 3' incision and the C-terminal half is responsible for the 5' incision.</text>
</comment>
<comment type="subunit">
    <text evidence="1">Interacts with UvrB in an incision complex.</text>
</comment>
<comment type="subcellular location">
    <subcellularLocation>
        <location evidence="1">Cytoplasm</location>
    </subcellularLocation>
</comment>
<comment type="similarity">
    <text evidence="1">Belongs to the UvrC family.</text>
</comment>
<protein>
    <recommendedName>
        <fullName evidence="1">UvrABC system protein C</fullName>
        <shortName evidence="1">Protein UvrC</shortName>
    </recommendedName>
    <alternativeName>
        <fullName evidence="1">Excinuclease ABC subunit C</fullName>
    </alternativeName>
</protein>
<evidence type="ECO:0000255" key="1">
    <source>
        <dbReference type="HAMAP-Rule" id="MF_00203"/>
    </source>
</evidence>
<gene>
    <name evidence="1" type="primary">uvrC</name>
    <name type="ordered locus">NWMN_1058</name>
</gene>
<organism>
    <name type="scientific">Staphylococcus aureus (strain Newman)</name>
    <dbReference type="NCBI Taxonomy" id="426430"/>
    <lineage>
        <taxon>Bacteria</taxon>
        <taxon>Bacillati</taxon>
        <taxon>Bacillota</taxon>
        <taxon>Bacilli</taxon>
        <taxon>Bacillales</taxon>
        <taxon>Staphylococcaceae</taxon>
        <taxon>Staphylococcus</taxon>
    </lineage>
</organism>